<keyword id="KW-0053">Apoptosis</keyword>
<keyword id="KW-0963">Cytoplasm</keyword>
<keyword id="KW-0597">Phosphoprotein</keyword>
<keyword id="KW-1185">Reference proteome</keyword>
<sequence length="326" mass="36891">MCSTSVYDLEDIPLEDDDPNSIEFKILAFYARHHVFKSTPAVFSPKLSRTRSLSQKALGTWSTDSWTQISLPCRDSLSSEKHISLGKKKSSWRTLFRVTEKEEEPPSSPKEIHAQGPFPVERQGRNQHWSRSLSSVEQCLESEAVDSKVACIANRVAEIVYSWPPPDDSQSQGGGKFKESVPKILHFELQGPQLRPCDSKKDGEDQIINRIVELLKYSGDQLGREIKRDKALVSIFQEGLSYSVFRTITDLFLRDVDTRGESEIKAQGFKAALAIDAIAKLTAIDNHPMNRMLGFGTKYLREYFSPWVQQNGGWEKILGLSHEEVD</sequence>
<evidence type="ECO:0000250" key="1"/>
<evidence type="ECO:0000256" key="2">
    <source>
        <dbReference type="SAM" id="MobiDB-lite"/>
    </source>
</evidence>
<evidence type="ECO:0000305" key="3"/>
<evidence type="ECO:0007744" key="4">
    <source>
    </source>
</evidence>
<comment type="function">
    <text>Plays a role in apoptosis.</text>
</comment>
<comment type="subcellular location">
    <subcellularLocation>
        <location evidence="1">Cytoplasm</location>
    </subcellularLocation>
</comment>
<comment type="PTM">
    <text evidence="1">Phosphorylated by MELK, leading to inhibit its pro-apoptotic function.</text>
</comment>
<comment type="similarity">
    <text evidence="3">Belongs to the Bcl-2 family.</text>
</comment>
<proteinExistence type="evidence at protein level"/>
<accession>Q6AYK4</accession>
<feature type="chain" id="PRO_0000143077" description="Apoptosis facilitator Bcl-2-like protein 14">
    <location>
        <begin position="1"/>
        <end position="326"/>
    </location>
</feature>
<feature type="region of interest" description="Disordered" evidence="2">
    <location>
        <begin position="99"/>
        <end position="127"/>
    </location>
</feature>
<feature type="short sequence motif" description="BH3">
    <location>
        <begin position="211"/>
        <end position="225"/>
    </location>
</feature>
<feature type="short sequence motif" description="BH2">
    <location>
        <begin position="307"/>
        <end position="314"/>
    </location>
</feature>
<feature type="modified residue" description="Phosphoserine" evidence="4">
    <location>
        <position position="44"/>
    </location>
</feature>
<name>B2L14_RAT</name>
<reference key="1">
    <citation type="journal article" date="2004" name="Genome Res.">
        <title>The status, quality, and expansion of the NIH full-length cDNA project: the Mammalian Gene Collection (MGC).</title>
        <authorList>
            <consortium name="The MGC Project Team"/>
        </authorList>
    </citation>
    <scope>NUCLEOTIDE SEQUENCE [LARGE SCALE MRNA]</scope>
    <source>
        <tissue>Testis</tissue>
    </source>
</reference>
<reference key="2">
    <citation type="journal article" date="2012" name="Nat. Commun.">
        <title>Quantitative maps of protein phosphorylation sites across 14 different rat organs and tissues.</title>
        <authorList>
            <person name="Lundby A."/>
            <person name="Secher A."/>
            <person name="Lage K."/>
            <person name="Nordsborg N.B."/>
            <person name="Dmytriyev A."/>
            <person name="Lundby C."/>
            <person name="Olsen J.V."/>
        </authorList>
    </citation>
    <scope>PHOSPHORYLATION [LARGE SCALE ANALYSIS] AT SER-44</scope>
    <scope>IDENTIFICATION BY MASS SPECTROMETRY [LARGE SCALE ANALYSIS]</scope>
</reference>
<organism>
    <name type="scientific">Rattus norvegicus</name>
    <name type="common">Rat</name>
    <dbReference type="NCBI Taxonomy" id="10116"/>
    <lineage>
        <taxon>Eukaryota</taxon>
        <taxon>Metazoa</taxon>
        <taxon>Chordata</taxon>
        <taxon>Craniata</taxon>
        <taxon>Vertebrata</taxon>
        <taxon>Euteleostomi</taxon>
        <taxon>Mammalia</taxon>
        <taxon>Eutheria</taxon>
        <taxon>Euarchontoglires</taxon>
        <taxon>Glires</taxon>
        <taxon>Rodentia</taxon>
        <taxon>Myomorpha</taxon>
        <taxon>Muroidea</taxon>
        <taxon>Muridae</taxon>
        <taxon>Murinae</taxon>
        <taxon>Rattus</taxon>
    </lineage>
</organism>
<dbReference type="EMBL" id="BC079010">
    <property type="protein sequence ID" value="AAH79010.1"/>
    <property type="molecule type" value="mRNA"/>
</dbReference>
<dbReference type="RefSeq" id="NP_001019509.1">
    <property type="nucleotide sequence ID" value="NM_001024338.1"/>
</dbReference>
<dbReference type="RefSeq" id="XP_006237595.1">
    <property type="nucleotide sequence ID" value="XM_006237533.4"/>
</dbReference>
<dbReference type="RefSeq" id="XP_006237596.1">
    <property type="nucleotide sequence ID" value="XM_006237534.5"/>
</dbReference>
<dbReference type="RefSeq" id="XP_008761638.1">
    <property type="nucleotide sequence ID" value="XM_008763416.2"/>
</dbReference>
<dbReference type="RefSeq" id="XP_017448325.1">
    <property type="nucleotide sequence ID" value="XM_017592836.3"/>
</dbReference>
<dbReference type="RefSeq" id="XP_038964149.1">
    <property type="nucleotide sequence ID" value="XM_039108221.2"/>
</dbReference>
<dbReference type="FunCoup" id="Q6AYK4">
    <property type="interactions" value="26"/>
</dbReference>
<dbReference type="STRING" id="10116.ENSRNOP00000029468"/>
<dbReference type="iPTMnet" id="Q6AYK4"/>
<dbReference type="PhosphoSitePlus" id="Q6AYK4"/>
<dbReference type="PaxDb" id="10116-ENSRNOP00000029468"/>
<dbReference type="Ensembl" id="ENSRNOT00000032229.6">
    <property type="protein sequence ID" value="ENSRNOP00000029468.3"/>
    <property type="gene ID" value="ENSRNOG00000028632.6"/>
</dbReference>
<dbReference type="GeneID" id="500348"/>
<dbReference type="KEGG" id="rno:500348"/>
<dbReference type="UCSC" id="RGD:1562777">
    <property type="organism name" value="rat"/>
</dbReference>
<dbReference type="AGR" id="RGD:1562777"/>
<dbReference type="CTD" id="79370"/>
<dbReference type="RGD" id="1562777">
    <property type="gene designation" value="Bcl2l14"/>
</dbReference>
<dbReference type="eggNOG" id="KOG4728">
    <property type="taxonomic scope" value="Eukaryota"/>
</dbReference>
<dbReference type="GeneTree" id="ENSGT00940000154318"/>
<dbReference type="HOGENOM" id="CLU_073095_0_0_1"/>
<dbReference type="InParanoid" id="Q6AYK4"/>
<dbReference type="OMA" id="AMCTTSA"/>
<dbReference type="OrthoDB" id="9948726at2759"/>
<dbReference type="PhylomeDB" id="Q6AYK4"/>
<dbReference type="TreeFam" id="TF336214"/>
<dbReference type="PRO" id="PR:Q6AYK4"/>
<dbReference type="Proteomes" id="UP000002494">
    <property type="component" value="Chromosome 4"/>
</dbReference>
<dbReference type="Bgee" id="ENSRNOG00000028632">
    <property type="expression patterns" value="Expressed in testis and 13 other cell types or tissues"/>
</dbReference>
<dbReference type="GO" id="GO:0005829">
    <property type="term" value="C:cytosol"/>
    <property type="evidence" value="ECO:0000266"/>
    <property type="project" value="RGD"/>
</dbReference>
<dbReference type="GO" id="GO:0043231">
    <property type="term" value="C:intracellular membrane-bounded organelle"/>
    <property type="evidence" value="ECO:0007669"/>
    <property type="project" value="Ensembl"/>
</dbReference>
<dbReference type="GO" id="GO:0019901">
    <property type="term" value="F:protein kinase binding"/>
    <property type="evidence" value="ECO:0000266"/>
    <property type="project" value="RGD"/>
</dbReference>
<dbReference type="GO" id="GO:0006915">
    <property type="term" value="P:apoptotic process"/>
    <property type="evidence" value="ECO:0000266"/>
    <property type="project" value="RGD"/>
</dbReference>
<dbReference type="GO" id="GO:2001238">
    <property type="term" value="P:positive regulation of extrinsic apoptotic signaling pathway"/>
    <property type="evidence" value="ECO:0000266"/>
    <property type="project" value="RGD"/>
</dbReference>
<dbReference type="Gene3D" id="1.10.437.10">
    <property type="entry name" value="Blc2-like"/>
    <property type="match status" value="1"/>
</dbReference>
<dbReference type="InterPro" id="IPR036834">
    <property type="entry name" value="Bcl-2-like_sf"/>
</dbReference>
<dbReference type="InterPro" id="IPR002475">
    <property type="entry name" value="Bcl2-like"/>
</dbReference>
<dbReference type="PANTHER" id="PTHR14965:SF1">
    <property type="entry name" value="APOPTOSIS FACILITATOR BCL-2-LIKE PROTEIN 14"/>
    <property type="match status" value="1"/>
</dbReference>
<dbReference type="PANTHER" id="PTHR14965">
    <property type="entry name" value="SI:CH73-248E21.1"/>
    <property type="match status" value="1"/>
</dbReference>
<dbReference type="SUPFAM" id="SSF56854">
    <property type="entry name" value="Bcl-2 inhibitors of programmed cell death"/>
    <property type="match status" value="1"/>
</dbReference>
<dbReference type="PROSITE" id="PS50062">
    <property type="entry name" value="BCL2_FAMILY"/>
    <property type="match status" value="1"/>
</dbReference>
<protein>
    <recommendedName>
        <fullName>Apoptosis facilitator Bcl-2-like protein 14</fullName>
        <shortName>Bcl2-L-14</shortName>
    </recommendedName>
</protein>
<gene>
    <name type="primary">Bcl2l14</name>
</gene>